<feature type="chain" id="PRO_0000278425" description="DNA replication complex GINS protein psf3">
    <location>
        <begin position="1"/>
        <end position="218"/>
    </location>
</feature>
<feature type="region of interest" description="Disordered" evidence="2">
    <location>
        <begin position="147"/>
        <end position="182"/>
    </location>
</feature>
<feature type="compositionally biased region" description="Gly residues" evidence="2">
    <location>
        <begin position="147"/>
        <end position="163"/>
    </location>
</feature>
<protein>
    <recommendedName>
        <fullName>DNA replication complex GINS protein psf3</fullName>
    </recommendedName>
    <alternativeName>
        <fullName>DNA replication complex protein 3</fullName>
    </alternativeName>
</protein>
<accession>Q7S432</accession>
<reference key="1">
    <citation type="journal article" date="2003" name="Nature">
        <title>The genome sequence of the filamentous fungus Neurospora crassa.</title>
        <authorList>
            <person name="Galagan J.E."/>
            <person name="Calvo S.E."/>
            <person name="Borkovich K.A."/>
            <person name="Selker E.U."/>
            <person name="Read N.D."/>
            <person name="Jaffe D.B."/>
            <person name="FitzHugh W."/>
            <person name="Ma L.-J."/>
            <person name="Smirnov S."/>
            <person name="Purcell S."/>
            <person name="Rehman B."/>
            <person name="Elkins T."/>
            <person name="Engels R."/>
            <person name="Wang S."/>
            <person name="Nielsen C.B."/>
            <person name="Butler J."/>
            <person name="Endrizzi M."/>
            <person name="Qui D."/>
            <person name="Ianakiev P."/>
            <person name="Bell-Pedersen D."/>
            <person name="Nelson M.A."/>
            <person name="Werner-Washburne M."/>
            <person name="Selitrennikoff C.P."/>
            <person name="Kinsey J.A."/>
            <person name="Braun E.L."/>
            <person name="Zelter A."/>
            <person name="Schulte U."/>
            <person name="Kothe G.O."/>
            <person name="Jedd G."/>
            <person name="Mewes H.-W."/>
            <person name="Staben C."/>
            <person name="Marcotte E."/>
            <person name="Greenberg D."/>
            <person name="Roy A."/>
            <person name="Foley K."/>
            <person name="Naylor J."/>
            <person name="Stange-Thomann N."/>
            <person name="Barrett R."/>
            <person name="Gnerre S."/>
            <person name="Kamal M."/>
            <person name="Kamvysselis M."/>
            <person name="Mauceli E.W."/>
            <person name="Bielke C."/>
            <person name="Rudd S."/>
            <person name="Frishman D."/>
            <person name="Krystofova S."/>
            <person name="Rasmussen C."/>
            <person name="Metzenberg R.L."/>
            <person name="Perkins D.D."/>
            <person name="Kroken S."/>
            <person name="Cogoni C."/>
            <person name="Macino G."/>
            <person name="Catcheside D.E.A."/>
            <person name="Li W."/>
            <person name="Pratt R.J."/>
            <person name="Osmani S.A."/>
            <person name="DeSouza C.P.C."/>
            <person name="Glass N.L."/>
            <person name="Orbach M.J."/>
            <person name="Berglund J.A."/>
            <person name="Voelker R."/>
            <person name="Yarden O."/>
            <person name="Plamann M."/>
            <person name="Seiler S."/>
            <person name="Dunlap J.C."/>
            <person name="Radford A."/>
            <person name="Aramayo R."/>
            <person name="Natvig D.O."/>
            <person name="Alex L.A."/>
            <person name="Mannhaupt G."/>
            <person name="Ebbole D.J."/>
            <person name="Freitag M."/>
            <person name="Paulsen I."/>
            <person name="Sachs M.S."/>
            <person name="Lander E.S."/>
            <person name="Nusbaum C."/>
            <person name="Birren B.W."/>
        </authorList>
    </citation>
    <scope>NUCLEOTIDE SEQUENCE [LARGE SCALE GENOMIC DNA]</scope>
    <source>
        <strain>ATCC 24698 / 74-OR23-1A / CBS 708.71 / DSM 1257 / FGSC 987</strain>
    </source>
</reference>
<evidence type="ECO:0000250" key="1"/>
<evidence type="ECO:0000256" key="2">
    <source>
        <dbReference type="SAM" id="MobiDB-lite"/>
    </source>
</evidence>
<evidence type="ECO:0000305" key="3"/>
<name>PSF3_NEUCR</name>
<keyword id="KW-0235">DNA replication</keyword>
<keyword id="KW-0539">Nucleus</keyword>
<keyword id="KW-1185">Reference proteome</keyword>
<sequence length="218" mass="23476">MSYYDIDAILTDAEKIPCTFQIDVPDLGYLDNQPGHTLKSGSRVALPIWLAEMLAIANTGAVDMDDPSQSSKSFITFDLPPALGNDVVQALKADPRSVPLRDQSAHFYALATHMMELSEEPELSAVLRKTFVSRAAEIALHARKVGGGGSSYHGRDGGGAGGKGKGKATKDDNASNLGVGGAGEDFLRGLDEWERKLFRSAHDGTKASKEWMENVKKR</sequence>
<comment type="function">
    <text evidence="1">The GINS complex plays an essential role in the initiation of DNA replication.</text>
</comment>
<comment type="subunit">
    <text evidence="1">Component of the GINS complex which is a heterotetramer of div-26/sld5, drc-1/psf1, drc-2/psf2 and drc-3/psf3.</text>
</comment>
<comment type="subcellular location">
    <subcellularLocation>
        <location evidence="1">Nucleus</location>
    </subcellularLocation>
</comment>
<comment type="similarity">
    <text evidence="3">Belongs to the GINS3/PSF3 family.</text>
</comment>
<gene>
    <name type="primary">drc-3</name>
    <name type="synonym">psf3</name>
    <name type="ORF">NCU09561</name>
</gene>
<dbReference type="EMBL" id="CM002242">
    <property type="protein sequence ID" value="EAA30250.3"/>
    <property type="molecule type" value="Genomic_DNA"/>
</dbReference>
<dbReference type="RefSeq" id="XP_959486.3">
    <property type="nucleotide sequence ID" value="XM_954393.3"/>
</dbReference>
<dbReference type="SMR" id="Q7S432"/>
<dbReference type="FunCoup" id="Q7S432">
    <property type="interactions" value="377"/>
</dbReference>
<dbReference type="STRING" id="367110.Q7S432"/>
<dbReference type="PaxDb" id="5141-EFNCRP00000009145"/>
<dbReference type="EnsemblFungi" id="EAA30250">
    <property type="protein sequence ID" value="EAA30250"/>
    <property type="gene ID" value="NCU09561"/>
</dbReference>
<dbReference type="GeneID" id="3875633"/>
<dbReference type="KEGG" id="ncr:NCU09561"/>
<dbReference type="VEuPathDB" id="FungiDB:NCU09561"/>
<dbReference type="HOGENOM" id="CLU_081646_0_2_1"/>
<dbReference type="InParanoid" id="Q7S432"/>
<dbReference type="OrthoDB" id="4583115at2759"/>
<dbReference type="Proteomes" id="UP000001805">
    <property type="component" value="Chromosome 7, Linkage Group VII"/>
</dbReference>
<dbReference type="GO" id="GO:0000811">
    <property type="term" value="C:GINS complex"/>
    <property type="evidence" value="ECO:0000318"/>
    <property type="project" value="GO_Central"/>
</dbReference>
<dbReference type="GO" id="GO:1902975">
    <property type="term" value="P:mitotic DNA replication initiation"/>
    <property type="evidence" value="ECO:0000318"/>
    <property type="project" value="GO_Central"/>
</dbReference>
<dbReference type="CDD" id="cd11713">
    <property type="entry name" value="GINS_A_psf3"/>
    <property type="match status" value="1"/>
</dbReference>
<dbReference type="CDD" id="cd21693">
    <property type="entry name" value="GINS_B_Psf3"/>
    <property type="match status" value="1"/>
</dbReference>
<dbReference type="Gene3D" id="1.20.58.2050">
    <property type="match status" value="1"/>
</dbReference>
<dbReference type="InterPro" id="IPR021151">
    <property type="entry name" value="GINS_A"/>
</dbReference>
<dbReference type="InterPro" id="IPR036224">
    <property type="entry name" value="GINS_bundle-like_dom_sf"/>
</dbReference>
<dbReference type="InterPro" id="IPR010492">
    <property type="entry name" value="GINS_Psf3"/>
</dbReference>
<dbReference type="InterPro" id="IPR038437">
    <property type="entry name" value="GINS_Psf3_sf"/>
</dbReference>
<dbReference type="InterPro" id="IPR055221">
    <property type="entry name" value="PSF3_N"/>
</dbReference>
<dbReference type="PANTHER" id="PTHR22768">
    <property type="entry name" value="DNA REPLICATION COMPLEX GINS PROTEIN PSF3"/>
    <property type="match status" value="1"/>
</dbReference>
<dbReference type="PANTHER" id="PTHR22768:SF0">
    <property type="entry name" value="DNA REPLICATION COMPLEX GINS PROTEIN PSF3"/>
    <property type="match status" value="1"/>
</dbReference>
<dbReference type="Pfam" id="PF22466">
    <property type="entry name" value="PSF3_N"/>
    <property type="match status" value="1"/>
</dbReference>
<dbReference type="Pfam" id="PF05916">
    <property type="entry name" value="Sld5"/>
    <property type="match status" value="1"/>
</dbReference>
<dbReference type="SUPFAM" id="SSF158573">
    <property type="entry name" value="GINS helical bundle-like"/>
    <property type="match status" value="1"/>
</dbReference>
<dbReference type="SUPFAM" id="SSF160059">
    <property type="entry name" value="PriA/YqbF domain"/>
    <property type="match status" value="1"/>
</dbReference>
<proteinExistence type="inferred from homology"/>
<organism>
    <name type="scientific">Neurospora crassa (strain ATCC 24698 / 74-OR23-1A / CBS 708.71 / DSM 1257 / FGSC 987)</name>
    <dbReference type="NCBI Taxonomy" id="367110"/>
    <lineage>
        <taxon>Eukaryota</taxon>
        <taxon>Fungi</taxon>
        <taxon>Dikarya</taxon>
        <taxon>Ascomycota</taxon>
        <taxon>Pezizomycotina</taxon>
        <taxon>Sordariomycetes</taxon>
        <taxon>Sordariomycetidae</taxon>
        <taxon>Sordariales</taxon>
        <taxon>Sordariaceae</taxon>
        <taxon>Neurospora</taxon>
    </lineage>
</organism>